<accession>Q6A6N5</accession>
<proteinExistence type="evidence at protein level"/>
<dbReference type="EMBL" id="AE017283">
    <property type="protein sequence ID" value="AAT83578.1"/>
    <property type="molecule type" value="Genomic_DNA"/>
</dbReference>
<dbReference type="RefSeq" id="WP_002516022.1">
    <property type="nucleotide sequence ID" value="NZ_CP025935.1"/>
</dbReference>
<dbReference type="PDB" id="8CRX">
    <property type="method" value="EM"/>
    <property type="resolution" value="2.78 A"/>
    <property type="chains" value="Q=1-90"/>
</dbReference>
<dbReference type="PDB" id="8CWO">
    <property type="method" value="EM"/>
    <property type="resolution" value="2.84 A"/>
    <property type="chains" value="Q=1-90"/>
</dbReference>
<dbReference type="PDBsum" id="8CRX"/>
<dbReference type="PDBsum" id="8CWO"/>
<dbReference type="SMR" id="Q6A6N5"/>
<dbReference type="EnsemblBacteria" id="AAT83578">
    <property type="protein sequence ID" value="AAT83578"/>
    <property type="gene ID" value="PPA1853"/>
</dbReference>
<dbReference type="GeneID" id="92857801"/>
<dbReference type="KEGG" id="pac:PPA1853"/>
<dbReference type="eggNOG" id="COG0186">
    <property type="taxonomic scope" value="Bacteria"/>
</dbReference>
<dbReference type="HOGENOM" id="CLU_073626_1_0_11"/>
<dbReference type="Proteomes" id="UP000000603">
    <property type="component" value="Chromosome"/>
</dbReference>
<dbReference type="GO" id="GO:0022627">
    <property type="term" value="C:cytosolic small ribosomal subunit"/>
    <property type="evidence" value="ECO:0007669"/>
    <property type="project" value="TreeGrafter"/>
</dbReference>
<dbReference type="GO" id="GO:0019843">
    <property type="term" value="F:rRNA binding"/>
    <property type="evidence" value="ECO:0007669"/>
    <property type="project" value="UniProtKB-UniRule"/>
</dbReference>
<dbReference type="GO" id="GO:0003735">
    <property type="term" value="F:structural constituent of ribosome"/>
    <property type="evidence" value="ECO:0007669"/>
    <property type="project" value="InterPro"/>
</dbReference>
<dbReference type="GO" id="GO:0006412">
    <property type="term" value="P:translation"/>
    <property type="evidence" value="ECO:0007669"/>
    <property type="project" value="UniProtKB-UniRule"/>
</dbReference>
<dbReference type="CDD" id="cd00364">
    <property type="entry name" value="Ribosomal_uS17"/>
    <property type="match status" value="1"/>
</dbReference>
<dbReference type="Gene3D" id="2.40.50.140">
    <property type="entry name" value="Nucleic acid-binding proteins"/>
    <property type="match status" value="1"/>
</dbReference>
<dbReference type="HAMAP" id="MF_01345_B">
    <property type="entry name" value="Ribosomal_uS17_B"/>
    <property type="match status" value="1"/>
</dbReference>
<dbReference type="InterPro" id="IPR012340">
    <property type="entry name" value="NA-bd_OB-fold"/>
</dbReference>
<dbReference type="InterPro" id="IPR000266">
    <property type="entry name" value="Ribosomal_uS17"/>
</dbReference>
<dbReference type="InterPro" id="IPR019984">
    <property type="entry name" value="Ribosomal_uS17_bact/chlr"/>
</dbReference>
<dbReference type="InterPro" id="IPR019979">
    <property type="entry name" value="Ribosomal_uS17_CS"/>
</dbReference>
<dbReference type="NCBIfam" id="NF004123">
    <property type="entry name" value="PRK05610.1"/>
    <property type="match status" value="1"/>
</dbReference>
<dbReference type="NCBIfam" id="TIGR03635">
    <property type="entry name" value="uS17_bact"/>
    <property type="match status" value="1"/>
</dbReference>
<dbReference type="PANTHER" id="PTHR10744">
    <property type="entry name" value="40S RIBOSOMAL PROTEIN S11 FAMILY MEMBER"/>
    <property type="match status" value="1"/>
</dbReference>
<dbReference type="PANTHER" id="PTHR10744:SF1">
    <property type="entry name" value="SMALL RIBOSOMAL SUBUNIT PROTEIN US17M"/>
    <property type="match status" value="1"/>
</dbReference>
<dbReference type="Pfam" id="PF00366">
    <property type="entry name" value="Ribosomal_S17"/>
    <property type="match status" value="1"/>
</dbReference>
<dbReference type="PRINTS" id="PR00973">
    <property type="entry name" value="RIBOSOMALS17"/>
</dbReference>
<dbReference type="SUPFAM" id="SSF50249">
    <property type="entry name" value="Nucleic acid-binding proteins"/>
    <property type="match status" value="1"/>
</dbReference>
<dbReference type="PROSITE" id="PS00056">
    <property type="entry name" value="RIBOSOMAL_S17"/>
    <property type="match status" value="1"/>
</dbReference>
<evidence type="ECO:0000255" key="1">
    <source>
        <dbReference type="HAMAP-Rule" id="MF_01345"/>
    </source>
</evidence>
<evidence type="ECO:0000305" key="2"/>
<evidence type="ECO:0007829" key="3">
    <source>
        <dbReference type="PDB" id="8CWO"/>
    </source>
</evidence>
<sequence length="90" mass="10452">MSENTAERTTRRKVREGLVVSDKMNKTITVMVEDRVKHPLYGKVMTKSVRLKAHDENNEAGMGDRVRIMETRPLSATKRWRLVEIIEKAK</sequence>
<organism>
    <name type="scientific">Cutibacterium acnes (strain DSM 16379 / KPA171202)</name>
    <name type="common">Propionibacterium acnes</name>
    <dbReference type="NCBI Taxonomy" id="267747"/>
    <lineage>
        <taxon>Bacteria</taxon>
        <taxon>Bacillati</taxon>
        <taxon>Actinomycetota</taxon>
        <taxon>Actinomycetes</taxon>
        <taxon>Propionibacteriales</taxon>
        <taxon>Propionibacteriaceae</taxon>
        <taxon>Cutibacterium</taxon>
    </lineage>
</organism>
<feature type="chain" id="PRO_0000233540" description="Small ribosomal subunit protein uS17">
    <location>
        <begin position="1"/>
        <end position="90"/>
    </location>
</feature>
<feature type="strand" evidence="3">
    <location>
        <begin position="14"/>
        <end position="24"/>
    </location>
</feature>
<feature type="strand" evidence="3">
    <location>
        <begin position="27"/>
        <end position="37"/>
    </location>
</feature>
<feature type="turn" evidence="3">
    <location>
        <begin position="39"/>
        <end position="41"/>
    </location>
</feature>
<feature type="strand" evidence="3">
    <location>
        <begin position="44"/>
        <end position="54"/>
    </location>
</feature>
<feature type="strand" evidence="3">
    <location>
        <begin position="65"/>
        <end position="70"/>
    </location>
</feature>
<feature type="strand" evidence="3">
    <location>
        <begin position="75"/>
        <end position="77"/>
    </location>
</feature>
<feature type="strand" evidence="3">
    <location>
        <begin position="80"/>
        <end position="87"/>
    </location>
</feature>
<reference key="1">
    <citation type="journal article" date="2004" name="Science">
        <title>The complete genome sequence of Propionibacterium acnes, a commensal of human skin.</title>
        <authorList>
            <person name="Brueggemann H."/>
            <person name="Henne A."/>
            <person name="Hoster F."/>
            <person name="Liesegang H."/>
            <person name="Wiezer A."/>
            <person name="Strittmatter A."/>
            <person name="Hujer S."/>
            <person name="Duerre P."/>
            <person name="Gottschalk G."/>
        </authorList>
    </citation>
    <scope>NUCLEOTIDE SEQUENCE [LARGE SCALE GENOMIC DNA]</scope>
    <source>
        <strain>DSM 16379 / KPA171202</strain>
    </source>
</reference>
<name>RS17_CUTAK</name>
<gene>
    <name evidence="1" type="primary">rpsQ</name>
    <name type="ordered locus">PPA1853</name>
</gene>
<comment type="function">
    <text evidence="1">One of the primary rRNA binding proteins, it binds specifically to the 5'-end of 16S ribosomal RNA.</text>
</comment>
<comment type="subunit">
    <text evidence="1">Part of the 30S ribosomal subunit.</text>
</comment>
<comment type="similarity">
    <text evidence="1">Belongs to the universal ribosomal protein uS17 family.</text>
</comment>
<keyword id="KW-0002">3D-structure</keyword>
<keyword id="KW-0687">Ribonucleoprotein</keyword>
<keyword id="KW-0689">Ribosomal protein</keyword>
<keyword id="KW-0694">RNA-binding</keyword>
<keyword id="KW-0699">rRNA-binding</keyword>
<protein>
    <recommendedName>
        <fullName evidence="1">Small ribosomal subunit protein uS17</fullName>
    </recommendedName>
    <alternativeName>
        <fullName evidence="2">30S ribosomal protein S17</fullName>
    </alternativeName>
</protein>